<dbReference type="EC" id="6.1.1.11" evidence="1"/>
<dbReference type="EMBL" id="AP009240">
    <property type="protein sequence ID" value="BAG76475.1"/>
    <property type="molecule type" value="Genomic_DNA"/>
</dbReference>
<dbReference type="RefSeq" id="WP_000886683.1">
    <property type="nucleotide sequence ID" value="NC_011415.1"/>
</dbReference>
<dbReference type="SMR" id="B6I8W4"/>
<dbReference type="GeneID" id="93776527"/>
<dbReference type="KEGG" id="ecy:ECSE_0951"/>
<dbReference type="HOGENOM" id="CLU_023797_1_1_6"/>
<dbReference type="UniPathway" id="UPA00906">
    <property type="reaction ID" value="UER00895"/>
</dbReference>
<dbReference type="Proteomes" id="UP000008199">
    <property type="component" value="Chromosome"/>
</dbReference>
<dbReference type="GO" id="GO:0005737">
    <property type="term" value="C:cytoplasm"/>
    <property type="evidence" value="ECO:0007669"/>
    <property type="project" value="UniProtKB-SubCell"/>
</dbReference>
<dbReference type="GO" id="GO:0005524">
    <property type="term" value="F:ATP binding"/>
    <property type="evidence" value="ECO:0007669"/>
    <property type="project" value="UniProtKB-UniRule"/>
</dbReference>
<dbReference type="GO" id="GO:0004828">
    <property type="term" value="F:serine-tRNA ligase activity"/>
    <property type="evidence" value="ECO:0007669"/>
    <property type="project" value="UniProtKB-UniRule"/>
</dbReference>
<dbReference type="GO" id="GO:0016260">
    <property type="term" value="P:selenocysteine biosynthetic process"/>
    <property type="evidence" value="ECO:0007669"/>
    <property type="project" value="UniProtKB-UniRule"/>
</dbReference>
<dbReference type="GO" id="GO:0006434">
    <property type="term" value="P:seryl-tRNA aminoacylation"/>
    <property type="evidence" value="ECO:0007669"/>
    <property type="project" value="UniProtKB-UniRule"/>
</dbReference>
<dbReference type="CDD" id="cd00770">
    <property type="entry name" value="SerRS_core"/>
    <property type="match status" value="1"/>
</dbReference>
<dbReference type="FunFam" id="1.10.287.40:FF:000001">
    <property type="entry name" value="Serine--tRNA ligase"/>
    <property type="match status" value="1"/>
</dbReference>
<dbReference type="FunFam" id="3.30.930.10:FF:000018">
    <property type="entry name" value="Serine--tRNA ligase"/>
    <property type="match status" value="1"/>
</dbReference>
<dbReference type="Gene3D" id="3.30.930.10">
    <property type="entry name" value="Bira Bifunctional Protein, Domain 2"/>
    <property type="match status" value="1"/>
</dbReference>
<dbReference type="Gene3D" id="1.10.287.40">
    <property type="entry name" value="Serine-tRNA synthetase, tRNA binding domain"/>
    <property type="match status" value="1"/>
</dbReference>
<dbReference type="HAMAP" id="MF_00176">
    <property type="entry name" value="Ser_tRNA_synth_type1"/>
    <property type="match status" value="1"/>
</dbReference>
<dbReference type="InterPro" id="IPR002314">
    <property type="entry name" value="aa-tRNA-synt_IIb"/>
</dbReference>
<dbReference type="InterPro" id="IPR006195">
    <property type="entry name" value="aa-tRNA-synth_II"/>
</dbReference>
<dbReference type="InterPro" id="IPR045864">
    <property type="entry name" value="aa-tRNA-synth_II/BPL/LPL"/>
</dbReference>
<dbReference type="InterPro" id="IPR002317">
    <property type="entry name" value="Ser-tRNA-ligase_type_1"/>
</dbReference>
<dbReference type="InterPro" id="IPR015866">
    <property type="entry name" value="Ser-tRNA-synth_1_N"/>
</dbReference>
<dbReference type="InterPro" id="IPR042103">
    <property type="entry name" value="SerRS_1_N_sf"/>
</dbReference>
<dbReference type="InterPro" id="IPR033729">
    <property type="entry name" value="SerRS_core"/>
</dbReference>
<dbReference type="InterPro" id="IPR010978">
    <property type="entry name" value="tRNA-bd_arm"/>
</dbReference>
<dbReference type="NCBIfam" id="TIGR00414">
    <property type="entry name" value="serS"/>
    <property type="match status" value="1"/>
</dbReference>
<dbReference type="PANTHER" id="PTHR43697:SF1">
    <property type="entry name" value="SERINE--TRNA LIGASE"/>
    <property type="match status" value="1"/>
</dbReference>
<dbReference type="PANTHER" id="PTHR43697">
    <property type="entry name" value="SERYL-TRNA SYNTHETASE"/>
    <property type="match status" value="1"/>
</dbReference>
<dbReference type="Pfam" id="PF02403">
    <property type="entry name" value="Seryl_tRNA_N"/>
    <property type="match status" value="1"/>
</dbReference>
<dbReference type="Pfam" id="PF00587">
    <property type="entry name" value="tRNA-synt_2b"/>
    <property type="match status" value="1"/>
</dbReference>
<dbReference type="PIRSF" id="PIRSF001529">
    <property type="entry name" value="Ser-tRNA-synth_IIa"/>
    <property type="match status" value="1"/>
</dbReference>
<dbReference type="PRINTS" id="PR00981">
    <property type="entry name" value="TRNASYNTHSER"/>
</dbReference>
<dbReference type="SUPFAM" id="SSF55681">
    <property type="entry name" value="Class II aaRS and biotin synthetases"/>
    <property type="match status" value="1"/>
</dbReference>
<dbReference type="SUPFAM" id="SSF46589">
    <property type="entry name" value="tRNA-binding arm"/>
    <property type="match status" value="1"/>
</dbReference>
<dbReference type="PROSITE" id="PS50862">
    <property type="entry name" value="AA_TRNA_LIGASE_II"/>
    <property type="match status" value="1"/>
</dbReference>
<evidence type="ECO:0000255" key="1">
    <source>
        <dbReference type="HAMAP-Rule" id="MF_00176"/>
    </source>
</evidence>
<name>SYS_ECOSE</name>
<gene>
    <name evidence="1" type="primary">serS</name>
    <name type="ordered locus">ECSE_0951</name>
</gene>
<reference key="1">
    <citation type="journal article" date="2008" name="DNA Res.">
        <title>Complete genome sequence and comparative analysis of the wild-type commensal Escherichia coli strain SE11 isolated from a healthy adult.</title>
        <authorList>
            <person name="Oshima K."/>
            <person name="Toh H."/>
            <person name="Ogura Y."/>
            <person name="Sasamoto H."/>
            <person name="Morita H."/>
            <person name="Park S.-H."/>
            <person name="Ooka T."/>
            <person name="Iyoda S."/>
            <person name="Taylor T.D."/>
            <person name="Hayashi T."/>
            <person name="Itoh K."/>
            <person name="Hattori M."/>
        </authorList>
    </citation>
    <scope>NUCLEOTIDE SEQUENCE [LARGE SCALE GENOMIC DNA]</scope>
    <source>
        <strain>SE11</strain>
    </source>
</reference>
<organism>
    <name type="scientific">Escherichia coli (strain SE11)</name>
    <dbReference type="NCBI Taxonomy" id="409438"/>
    <lineage>
        <taxon>Bacteria</taxon>
        <taxon>Pseudomonadati</taxon>
        <taxon>Pseudomonadota</taxon>
        <taxon>Gammaproteobacteria</taxon>
        <taxon>Enterobacterales</taxon>
        <taxon>Enterobacteriaceae</taxon>
        <taxon>Escherichia</taxon>
    </lineage>
</organism>
<sequence length="430" mass="48414">MLDPNLLRNEPDAVAEKLARRGFKLDVDKLGALEERRKVLQVKTENLQAERNSRSKSIGQAKARGEDIEPLRLEVNKLGEELDAAKAELDALQAEIRDIALTIPNLPADEVPVGKDENDNVEVSRWGTPREFDFEVRDHVTLGEMHSGLDFAAAVKLTGSRFVVMKGQIARMHRALSQFMLDLHTEQHGYSENYVPYLVNQDTLYGTGQLPKFAGDLFHTRPLEEEADTSNYALIPTAEVPLTNLVRGEIIDEDDLPIKMTAHTPCFRSEAGSYGRDTRGLIRMHQFDKVEMVQIVRPEDSMAALEEMTGHAEKVLQLLGLPYRKIILCTGDMGFGACKTYDLEVWIPAQNTYREISSCSNVWDFQARRMQARCRSKSDKKTRLVHTLNGSGLAVGRTLVAVMENYQQADGRIEVPEVLRPYMNGLEYIG</sequence>
<comment type="function">
    <text evidence="1">Catalyzes the attachment of serine to tRNA(Ser). Is also able to aminoacylate tRNA(Sec) with serine, to form the misacylated tRNA L-seryl-tRNA(Sec), which will be further converted into selenocysteinyl-tRNA(Sec).</text>
</comment>
<comment type="catalytic activity">
    <reaction evidence="1">
        <text>tRNA(Ser) + L-serine + ATP = L-seryl-tRNA(Ser) + AMP + diphosphate + H(+)</text>
        <dbReference type="Rhea" id="RHEA:12292"/>
        <dbReference type="Rhea" id="RHEA-COMP:9669"/>
        <dbReference type="Rhea" id="RHEA-COMP:9703"/>
        <dbReference type="ChEBI" id="CHEBI:15378"/>
        <dbReference type="ChEBI" id="CHEBI:30616"/>
        <dbReference type="ChEBI" id="CHEBI:33019"/>
        <dbReference type="ChEBI" id="CHEBI:33384"/>
        <dbReference type="ChEBI" id="CHEBI:78442"/>
        <dbReference type="ChEBI" id="CHEBI:78533"/>
        <dbReference type="ChEBI" id="CHEBI:456215"/>
        <dbReference type="EC" id="6.1.1.11"/>
    </reaction>
</comment>
<comment type="catalytic activity">
    <reaction evidence="1">
        <text>tRNA(Sec) + L-serine + ATP = L-seryl-tRNA(Sec) + AMP + diphosphate + H(+)</text>
        <dbReference type="Rhea" id="RHEA:42580"/>
        <dbReference type="Rhea" id="RHEA-COMP:9742"/>
        <dbReference type="Rhea" id="RHEA-COMP:10128"/>
        <dbReference type="ChEBI" id="CHEBI:15378"/>
        <dbReference type="ChEBI" id="CHEBI:30616"/>
        <dbReference type="ChEBI" id="CHEBI:33019"/>
        <dbReference type="ChEBI" id="CHEBI:33384"/>
        <dbReference type="ChEBI" id="CHEBI:78442"/>
        <dbReference type="ChEBI" id="CHEBI:78533"/>
        <dbReference type="ChEBI" id="CHEBI:456215"/>
        <dbReference type="EC" id="6.1.1.11"/>
    </reaction>
</comment>
<comment type="pathway">
    <text evidence="1">Aminoacyl-tRNA biosynthesis; selenocysteinyl-tRNA(Sec) biosynthesis; L-seryl-tRNA(Sec) from L-serine and tRNA(Sec): step 1/1.</text>
</comment>
<comment type="subunit">
    <text evidence="1">Homodimer. The tRNA molecule binds across the dimer.</text>
</comment>
<comment type="subcellular location">
    <subcellularLocation>
        <location evidence="1">Cytoplasm</location>
    </subcellularLocation>
</comment>
<comment type="domain">
    <text evidence="1">Consists of two distinct domains, a catalytic core and a N-terminal extension that is involved in tRNA binding.</text>
</comment>
<comment type="similarity">
    <text evidence="1">Belongs to the class-II aminoacyl-tRNA synthetase family. Type-1 seryl-tRNA synthetase subfamily.</text>
</comment>
<feature type="chain" id="PRO_1000098065" description="Serine--tRNA ligase">
    <location>
        <begin position="1"/>
        <end position="430"/>
    </location>
</feature>
<feature type="binding site" evidence="1">
    <location>
        <begin position="237"/>
        <end position="239"/>
    </location>
    <ligand>
        <name>L-serine</name>
        <dbReference type="ChEBI" id="CHEBI:33384"/>
    </ligand>
</feature>
<feature type="binding site" evidence="1">
    <location>
        <begin position="268"/>
        <end position="270"/>
    </location>
    <ligand>
        <name>ATP</name>
        <dbReference type="ChEBI" id="CHEBI:30616"/>
    </ligand>
</feature>
<feature type="binding site" evidence="1">
    <location>
        <position position="291"/>
    </location>
    <ligand>
        <name>L-serine</name>
        <dbReference type="ChEBI" id="CHEBI:33384"/>
    </ligand>
</feature>
<feature type="binding site" evidence="1">
    <location>
        <begin position="355"/>
        <end position="358"/>
    </location>
    <ligand>
        <name>ATP</name>
        <dbReference type="ChEBI" id="CHEBI:30616"/>
    </ligand>
</feature>
<feature type="binding site" evidence="1">
    <location>
        <position position="391"/>
    </location>
    <ligand>
        <name>L-serine</name>
        <dbReference type="ChEBI" id="CHEBI:33384"/>
    </ligand>
</feature>
<keyword id="KW-0030">Aminoacyl-tRNA synthetase</keyword>
<keyword id="KW-0067">ATP-binding</keyword>
<keyword id="KW-0963">Cytoplasm</keyword>
<keyword id="KW-0436">Ligase</keyword>
<keyword id="KW-0547">Nucleotide-binding</keyword>
<keyword id="KW-0648">Protein biosynthesis</keyword>
<accession>B6I8W4</accession>
<proteinExistence type="inferred from homology"/>
<protein>
    <recommendedName>
        <fullName evidence="1">Serine--tRNA ligase</fullName>
        <ecNumber evidence="1">6.1.1.11</ecNumber>
    </recommendedName>
    <alternativeName>
        <fullName evidence="1">Seryl-tRNA synthetase</fullName>
        <shortName evidence="1">SerRS</shortName>
    </alternativeName>
    <alternativeName>
        <fullName evidence="1">Seryl-tRNA(Ser/Sec) synthetase</fullName>
    </alternativeName>
</protein>